<sequence length="229" mass="25693">MANELTWHDVLAEEKQQPYFLNTLQTVASERQSGVTIYPPQKDVFNAFRFTELGDVKVVILGQDPYHGPGQAHGLAFSVRPGIAIPPSLLNMYKELENTIPGFTRPNHGYLESWARQGVLLLNTVLTVRAGQAHSHASLGWETFTDKVISLINQHREGVVFLLWGSHAQKKGAIIDKQRHHVLKAPHPSPLSAHRGFFGCNHFVLANQWLEQRGETPIDWMPVLPAESE</sequence>
<evidence type="ECO:0000255" key="1">
    <source>
        <dbReference type="HAMAP-Rule" id="MF_00148"/>
    </source>
</evidence>
<organism>
    <name type="scientific">Escherichia coli (strain K12 / DH10B)</name>
    <dbReference type="NCBI Taxonomy" id="316385"/>
    <lineage>
        <taxon>Bacteria</taxon>
        <taxon>Pseudomonadati</taxon>
        <taxon>Pseudomonadota</taxon>
        <taxon>Gammaproteobacteria</taxon>
        <taxon>Enterobacterales</taxon>
        <taxon>Enterobacteriaceae</taxon>
        <taxon>Escherichia</taxon>
    </lineage>
</organism>
<keyword id="KW-0963">Cytoplasm</keyword>
<keyword id="KW-0227">DNA damage</keyword>
<keyword id="KW-0234">DNA repair</keyword>
<keyword id="KW-0378">Hydrolase</keyword>
<protein>
    <recommendedName>
        <fullName evidence="1">Uracil-DNA glycosylase</fullName>
        <shortName evidence="1">UDG</shortName>
        <ecNumber evidence="1">3.2.2.27</ecNumber>
    </recommendedName>
</protein>
<gene>
    <name evidence="1" type="primary">ung</name>
    <name type="ordered locus">ECDH10B_2748</name>
</gene>
<comment type="function">
    <text evidence="1">Excises uracil residues from the DNA which can arise as a result of misincorporation of dUMP residues by DNA polymerase or due to deamination of cytosine.</text>
</comment>
<comment type="catalytic activity">
    <reaction evidence="1">
        <text>Hydrolyzes single-stranded DNA or mismatched double-stranded DNA and polynucleotides, releasing free uracil.</text>
        <dbReference type="EC" id="3.2.2.27"/>
    </reaction>
</comment>
<comment type="subcellular location">
    <subcellularLocation>
        <location evidence="1">Cytoplasm</location>
    </subcellularLocation>
</comment>
<comment type="similarity">
    <text evidence="1">Belongs to the uracil-DNA glycosylase (UDG) superfamily. UNG family.</text>
</comment>
<accession>B1XBQ7</accession>
<name>UNG_ECODH</name>
<reference key="1">
    <citation type="journal article" date="2008" name="J. Bacteriol.">
        <title>The complete genome sequence of Escherichia coli DH10B: insights into the biology of a laboratory workhorse.</title>
        <authorList>
            <person name="Durfee T."/>
            <person name="Nelson R."/>
            <person name="Baldwin S."/>
            <person name="Plunkett G. III"/>
            <person name="Burland V."/>
            <person name="Mau B."/>
            <person name="Petrosino J.F."/>
            <person name="Qin X."/>
            <person name="Muzny D.M."/>
            <person name="Ayele M."/>
            <person name="Gibbs R.A."/>
            <person name="Csorgo B."/>
            <person name="Posfai G."/>
            <person name="Weinstock G.M."/>
            <person name="Blattner F.R."/>
        </authorList>
    </citation>
    <scope>NUCLEOTIDE SEQUENCE [LARGE SCALE GENOMIC DNA]</scope>
    <source>
        <strain>K12 / DH10B</strain>
    </source>
</reference>
<proteinExistence type="inferred from homology"/>
<dbReference type="EC" id="3.2.2.27" evidence="1"/>
<dbReference type="EMBL" id="CP000948">
    <property type="protein sequence ID" value="ACB03731.1"/>
    <property type="molecule type" value="Genomic_DNA"/>
</dbReference>
<dbReference type="RefSeq" id="WP_001262716.1">
    <property type="nucleotide sequence ID" value="NC_010473.1"/>
</dbReference>
<dbReference type="SMR" id="B1XBQ7"/>
<dbReference type="GeneID" id="93774506"/>
<dbReference type="KEGG" id="ecd:ECDH10B_2748"/>
<dbReference type="HOGENOM" id="CLU_032162_3_1_6"/>
<dbReference type="GO" id="GO:0005737">
    <property type="term" value="C:cytoplasm"/>
    <property type="evidence" value="ECO:0007669"/>
    <property type="project" value="UniProtKB-SubCell"/>
</dbReference>
<dbReference type="GO" id="GO:0004844">
    <property type="term" value="F:uracil DNA N-glycosylase activity"/>
    <property type="evidence" value="ECO:0007669"/>
    <property type="project" value="UniProtKB-UniRule"/>
</dbReference>
<dbReference type="GO" id="GO:0097510">
    <property type="term" value="P:base-excision repair, AP site formation via deaminated base removal"/>
    <property type="evidence" value="ECO:0007669"/>
    <property type="project" value="TreeGrafter"/>
</dbReference>
<dbReference type="CDD" id="cd10027">
    <property type="entry name" value="UDG-F1-like"/>
    <property type="match status" value="1"/>
</dbReference>
<dbReference type="FunFam" id="3.40.470.10:FF:000001">
    <property type="entry name" value="Uracil-DNA glycosylase"/>
    <property type="match status" value="1"/>
</dbReference>
<dbReference type="Gene3D" id="3.40.470.10">
    <property type="entry name" value="Uracil-DNA glycosylase-like domain"/>
    <property type="match status" value="1"/>
</dbReference>
<dbReference type="HAMAP" id="MF_00148">
    <property type="entry name" value="UDG"/>
    <property type="match status" value="1"/>
</dbReference>
<dbReference type="InterPro" id="IPR002043">
    <property type="entry name" value="UDG_fam1"/>
</dbReference>
<dbReference type="InterPro" id="IPR018085">
    <property type="entry name" value="Ura-DNA_Glyclase_AS"/>
</dbReference>
<dbReference type="InterPro" id="IPR005122">
    <property type="entry name" value="Uracil-DNA_glycosylase-like"/>
</dbReference>
<dbReference type="InterPro" id="IPR036895">
    <property type="entry name" value="Uracil-DNA_glycosylase-like_sf"/>
</dbReference>
<dbReference type="NCBIfam" id="NF003588">
    <property type="entry name" value="PRK05254.1-1"/>
    <property type="match status" value="1"/>
</dbReference>
<dbReference type="NCBIfam" id="NF003589">
    <property type="entry name" value="PRK05254.1-2"/>
    <property type="match status" value="1"/>
</dbReference>
<dbReference type="NCBIfam" id="NF003591">
    <property type="entry name" value="PRK05254.1-4"/>
    <property type="match status" value="1"/>
</dbReference>
<dbReference type="NCBIfam" id="NF003592">
    <property type="entry name" value="PRK05254.1-5"/>
    <property type="match status" value="1"/>
</dbReference>
<dbReference type="NCBIfam" id="TIGR00628">
    <property type="entry name" value="ung"/>
    <property type="match status" value="1"/>
</dbReference>
<dbReference type="PANTHER" id="PTHR11264">
    <property type="entry name" value="URACIL-DNA GLYCOSYLASE"/>
    <property type="match status" value="1"/>
</dbReference>
<dbReference type="PANTHER" id="PTHR11264:SF0">
    <property type="entry name" value="URACIL-DNA GLYCOSYLASE"/>
    <property type="match status" value="1"/>
</dbReference>
<dbReference type="Pfam" id="PF03167">
    <property type="entry name" value="UDG"/>
    <property type="match status" value="1"/>
</dbReference>
<dbReference type="SMART" id="SM00986">
    <property type="entry name" value="UDG"/>
    <property type="match status" value="1"/>
</dbReference>
<dbReference type="SMART" id="SM00987">
    <property type="entry name" value="UreE_C"/>
    <property type="match status" value="1"/>
</dbReference>
<dbReference type="SUPFAM" id="SSF52141">
    <property type="entry name" value="Uracil-DNA glycosylase-like"/>
    <property type="match status" value="1"/>
</dbReference>
<dbReference type="PROSITE" id="PS00130">
    <property type="entry name" value="U_DNA_GLYCOSYLASE"/>
    <property type="match status" value="1"/>
</dbReference>
<feature type="chain" id="PRO_1000096578" description="Uracil-DNA glycosylase">
    <location>
        <begin position="1"/>
        <end position="229"/>
    </location>
</feature>
<feature type="active site" description="Proton acceptor" evidence="1">
    <location>
        <position position="64"/>
    </location>
</feature>